<keyword id="KW-0249">Electron transport</keyword>
<keyword id="KW-0349">Heme</keyword>
<keyword id="KW-0408">Iron</keyword>
<keyword id="KW-0472">Membrane</keyword>
<keyword id="KW-0479">Metal-binding</keyword>
<keyword id="KW-0496">Mitochondrion</keyword>
<keyword id="KW-0999">Mitochondrion inner membrane</keyword>
<keyword id="KW-0679">Respiratory chain</keyword>
<keyword id="KW-0812">Transmembrane</keyword>
<keyword id="KW-1133">Transmembrane helix</keyword>
<keyword id="KW-0813">Transport</keyword>
<keyword id="KW-0830">Ubiquinone</keyword>
<organism>
    <name type="scientific">Dicotyles tajacu</name>
    <name type="common">Collared peccary</name>
    <name type="synonym">Pecari tajacu</name>
    <dbReference type="NCBI Taxonomy" id="9829"/>
    <lineage>
        <taxon>Eukaryota</taxon>
        <taxon>Metazoa</taxon>
        <taxon>Chordata</taxon>
        <taxon>Craniata</taxon>
        <taxon>Vertebrata</taxon>
        <taxon>Euteleostomi</taxon>
        <taxon>Mammalia</taxon>
        <taxon>Eutheria</taxon>
        <taxon>Laurasiatheria</taxon>
        <taxon>Artiodactyla</taxon>
        <taxon>Suina</taxon>
        <taxon>Tayassuidae</taxon>
        <taxon>Dicotyles</taxon>
    </lineage>
</organism>
<gene>
    <name type="primary">MT-CYB</name>
    <name type="synonym">COB</name>
    <name type="synonym">CYTB</name>
    <name type="synonym">MTCYB</name>
</gene>
<proteinExistence type="inferred from homology"/>
<accession>P24966</accession>
<reference key="1">
    <citation type="journal article" date="1991" name="J. Mol. Evol.">
        <title>Evolution of the cytochrome b gene of mammals.</title>
        <authorList>
            <person name="Irwin D.M."/>
            <person name="Kocher T.D."/>
            <person name="Wilson A.C."/>
        </authorList>
    </citation>
    <scope>NUCLEOTIDE SEQUENCE [GENOMIC DNA]</scope>
</reference>
<evidence type="ECO:0000250" key="1"/>
<evidence type="ECO:0000250" key="2">
    <source>
        <dbReference type="UniProtKB" id="P00157"/>
    </source>
</evidence>
<evidence type="ECO:0000255" key="3">
    <source>
        <dbReference type="PROSITE-ProRule" id="PRU00967"/>
    </source>
</evidence>
<evidence type="ECO:0000255" key="4">
    <source>
        <dbReference type="PROSITE-ProRule" id="PRU00968"/>
    </source>
</evidence>
<dbReference type="EMBL" id="X56296">
    <property type="protein sequence ID" value="CAA39743.1"/>
    <property type="molecule type" value="Genomic_DNA"/>
</dbReference>
<dbReference type="PIR" id="S17420">
    <property type="entry name" value="S17420"/>
</dbReference>
<dbReference type="RefSeq" id="YP_002601097.1">
    <property type="nucleotide sequence ID" value="NC_012103.1"/>
</dbReference>
<dbReference type="SMR" id="P24966"/>
<dbReference type="GeneID" id="7441204"/>
<dbReference type="CTD" id="4519"/>
<dbReference type="GO" id="GO:0005743">
    <property type="term" value="C:mitochondrial inner membrane"/>
    <property type="evidence" value="ECO:0007669"/>
    <property type="project" value="UniProtKB-SubCell"/>
</dbReference>
<dbReference type="GO" id="GO:0045275">
    <property type="term" value="C:respiratory chain complex III"/>
    <property type="evidence" value="ECO:0007669"/>
    <property type="project" value="InterPro"/>
</dbReference>
<dbReference type="GO" id="GO:0046872">
    <property type="term" value="F:metal ion binding"/>
    <property type="evidence" value="ECO:0007669"/>
    <property type="project" value="UniProtKB-KW"/>
</dbReference>
<dbReference type="GO" id="GO:0008121">
    <property type="term" value="F:ubiquinol-cytochrome-c reductase activity"/>
    <property type="evidence" value="ECO:0007669"/>
    <property type="project" value="InterPro"/>
</dbReference>
<dbReference type="GO" id="GO:0006122">
    <property type="term" value="P:mitochondrial electron transport, ubiquinol to cytochrome c"/>
    <property type="evidence" value="ECO:0007669"/>
    <property type="project" value="TreeGrafter"/>
</dbReference>
<dbReference type="CDD" id="cd00290">
    <property type="entry name" value="cytochrome_b_C"/>
    <property type="match status" value="1"/>
</dbReference>
<dbReference type="CDD" id="cd00284">
    <property type="entry name" value="Cytochrome_b_N"/>
    <property type="match status" value="1"/>
</dbReference>
<dbReference type="FunFam" id="1.20.810.10:FF:000002">
    <property type="entry name" value="Cytochrome b"/>
    <property type="match status" value="1"/>
</dbReference>
<dbReference type="Gene3D" id="1.20.810.10">
    <property type="entry name" value="Cytochrome Bc1 Complex, Chain C"/>
    <property type="match status" value="1"/>
</dbReference>
<dbReference type="InterPro" id="IPR005798">
    <property type="entry name" value="Cyt_b/b6_C"/>
</dbReference>
<dbReference type="InterPro" id="IPR036150">
    <property type="entry name" value="Cyt_b/b6_C_sf"/>
</dbReference>
<dbReference type="InterPro" id="IPR005797">
    <property type="entry name" value="Cyt_b/b6_N"/>
</dbReference>
<dbReference type="InterPro" id="IPR027387">
    <property type="entry name" value="Cytb/b6-like_sf"/>
</dbReference>
<dbReference type="InterPro" id="IPR030689">
    <property type="entry name" value="Cytochrome_b"/>
</dbReference>
<dbReference type="InterPro" id="IPR048260">
    <property type="entry name" value="Cytochrome_b_C_euk/bac"/>
</dbReference>
<dbReference type="InterPro" id="IPR048259">
    <property type="entry name" value="Cytochrome_b_N_euk/bac"/>
</dbReference>
<dbReference type="InterPro" id="IPR016174">
    <property type="entry name" value="Di-haem_cyt_TM"/>
</dbReference>
<dbReference type="PANTHER" id="PTHR19271">
    <property type="entry name" value="CYTOCHROME B"/>
    <property type="match status" value="1"/>
</dbReference>
<dbReference type="PANTHER" id="PTHR19271:SF16">
    <property type="entry name" value="CYTOCHROME B"/>
    <property type="match status" value="1"/>
</dbReference>
<dbReference type="Pfam" id="PF00032">
    <property type="entry name" value="Cytochrom_B_C"/>
    <property type="match status" value="1"/>
</dbReference>
<dbReference type="Pfam" id="PF00033">
    <property type="entry name" value="Cytochrome_B"/>
    <property type="match status" value="1"/>
</dbReference>
<dbReference type="PIRSF" id="PIRSF038885">
    <property type="entry name" value="COB"/>
    <property type="match status" value="1"/>
</dbReference>
<dbReference type="SUPFAM" id="SSF81648">
    <property type="entry name" value="a domain/subunit of cytochrome bc1 complex (Ubiquinol-cytochrome c reductase)"/>
    <property type="match status" value="1"/>
</dbReference>
<dbReference type="SUPFAM" id="SSF81342">
    <property type="entry name" value="Transmembrane di-heme cytochromes"/>
    <property type="match status" value="1"/>
</dbReference>
<dbReference type="PROSITE" id="PS51003">
    <property type="entry name" value="CYTB_CTER"/>
    <property type="match status" value="1"/>
</dbReference>
<dbReference type="PROSITE" id="PS51002">
    <property type="entry name" value="CYTB_NTER"/>
    <property type="match status" value="1"/>
</dbReference>
<protein>
    <recommendedName>
        <fullName>Cytochrome b</fullName>
    </recommendedName>
    <alternativeName>
        <fullName>Complex III subunit 3</fullName>
    </alternativeName>
    <alternativeName>
        <fullName>Complex III subunit III</fullName>
    </alternativeName>
    <alternativeName>
        <fullName>Cytochrome b-c1 complex subunit 3</fullName>
    </alternativeName>
    <alternativeName>
        <fullName>Ubiquinol-cytochrome-c reductase complex cytochrome b subunit</fullName>
    </alternativeName>
</protein>
<feature type="chain" id="PRO_0000061649" description="Cytochrome b">
    <location>
        <begin position="1"/>
        <end position="379"/>
    </location>
</feature>
<feature type="transmembrane region" description="Helical" evidence="2">
    <location>
        <begin position="33"/>
        <end position="53"/>
    </location>
</feature>
<feature type="transmembrane region" description="Helical" evidence="2">
    <location>
        <begin position="77"/>
        <end position="98"/>
    </location>
</feature>
<feature type="transmembrane region" description="Helical" evidence="2">
    <location>
        <begin position="113"/>
        <end position="133"/>
    </location>
</feature>
<feature type="transmembrane region" description="Helical" evidence="2">
    <location>
        <begin position="178"/>
        <end position="198"/>
    </location>
</feature>
<feature type="transmembrane region" description="Helical" evidence="2">
    <location>
        <begin position="226"/>
        <end position="246"/>
    </location>
</feature>
<feature type="transmembrane region" description="Helical" evidence="2">
    <location>
        <begin position="288"/>
        <end position="308"/>
    </location>
</feature>
<feature type="transmembrane region" description="Helical" evidence="2">
    <location>
        <begin position="320"/>
        <end position="340"/>
    </location>
</feature>
<feature type="transmembrane region" description="Helical" evidence="2">
    <location>
        <begin position="347"/>
        <end position="367"/>
    </location>
</feature>
<feature type="binding site" description="axial binding residue" evidence="2">
    <location>
        <position position="83"/>
    </location>
    <ligand>
        <name>heme b</name>
        <dbReference type="ChEBI" id="CHEBI:60344"/>
        <label>b562</label>
    </ligand>
    <ligandPart>
        <name>Fe</name>
        <dbReference type="ChEBI" id="CHEBI:18248"/>
    </ligandPart>
</feature>
<feature type="binding site" description="axial binding residue" evidence="2">
    <location>
        <position position="97"/>
    </location>
    <ligand>
        <name>heme b</name>
        <dbReference type="ChEBI" id="CHEBI:60344"/>
        <label>b566</label>
    </ligand>
    <ligandPart>
        <name>Fe</name>
        <dbReference type="ChEBI" id="CHEBI:18248"/>
    </ligandPart>
</feature>
<feature type="binding site" description="axial binding residue" evidence="2">
    <location>
        <position position="182"/>
    </location>
    <ligand>
        <name>heme b</name>
        <dbReference type="ChEBI" id="CHEBI:60344"/>
        <label>b562</label>
    </ligand>
    <ligandPart>
        <name>Fe</name>
        <dbReference type="ChEBI" id="CHEBI:18248"/>
    </ligandPart>
</feature>
<feature type="binding site" description="axial binding residue" evidence="2">
    <location>
        <position position="196"/>
    </location>
    <ligand>
        <name>heme b</name>
        <dbReference type="ChEBI" id="CHEBI:60344"/>
        <label>b566</label>
    </ligand>
    <ligandPart>
        <name>Fe</name>
        <dbReference type="ChEBI" id="CHEBI:18248"/>
    </ligandPart>
</feature>
<feature type="binding site" evidence="2">
    <location>
        <position position="201"/>
    </location>
    <ligand>
        <name>a ubiquinone</name>
        <dbReference type="ChEBI" id="CHEBI:16389"/>
    </ligand>
</feature>
<name>CYB_DICTA</name>
<comment type="function">
    <text evidence="2">Component of the ubiquinol-cytochrome c reductase complex (complex III or cytochrome b-c1 complex) that is part of the mitochondrial respiratory chain. The b-c1 complex mediates electron transfer from ubiquinol to cytochrome c. Contributes to the generation of a proton gradient across the mitochondrial membrane that is then used for ATP synthesis.</text>
</comment>
<comment type="cofactor">
    <cofactor evidence="2">
        <name>heme b</name>
        <dbReference type="ChEBI" id="CHEBI:60344"/>
    </cofactor>
    <text evidence="2">Binds 2 heme b groups non-covalently.</text>
</comment>
<comment type="subunit">
    <text evidence="2">The cytochrome bc1 complex contains 11 subunits: 3 respiratory subunits (MT-CYB, CYC1 and UQCRFS1), 2 core proteins (UQCRC1 and UQCRC2) and 6 low-molecular weight proteins (UQCRH/QCR6, UQCRB/QCR7, UQCRQ/QCR8, UQCR10/QCR9, UQCR11/QCR10 and a cleavage product of UQCRFS1). This cytochrome bc1 complex then forms a dimer.</text>
</comment>
<comment type="subcellular location">
    <subcellularLocation>
        <location evidence="2">Mitochondrion inner membrane</location>
        <topology evidence="2">Multi-pass membrane protein</topology>
    </subcellularLocation>
</comment>
<comment type="miscellaneous">
    <text evidence="1">Heme 1 (or BL or b562) is low-potential and absorbs at about 562 nm, and heme 2 (or BH or b566) is high-potential and absorbs at about 566 nm.</text>
</comment>
<comment type="similarity">
    <text evidence="3 4">Belongs to the cytochrome b family.</text>
</comment>
<comment type="caution">
    <text evidence="2">The full-length protein contains only eight transmembrane helices, not nine as predicted by bioinformatics tools.</text>
</comment>
<sequence length="379" mass="42814">MTNIRKSHPLMKIINNTFIDLPTPSNISSWWNFGSLLGICLLLQILTGLFLAMHYTPDTTTAFSSVTHICRDVNYGWIIRYLHANGASMFFICLFIHVGRGLYYGSYLFLETWNIGVILLLTVMATAFMGYVLPWGQMSFWAATVITNLLSAIPYIGTDLVEWIWGGFSVDKATLTRFFAFHFILPFIITALVIVHLLFLHETGSNNPTGIPSNMDKIPFHPYYTIKDILGATLMILILLLLVLFSPDLLGDPDNYTPANPLNTPSHIKPEWYFLFAYAILRSIPNKLGGVLALALSILILALVPALHTSKQRSMMFRPLSQLLFWMLVADFLTLTWIGSQPVEHPFIIIGQLASILYFLIILVLMPVANIIENNLLKW</sequence>
<geneLocation type="mitochondrion"/>